<protein>
    <recommendedName>
        <fullName>Mitochondrial import receptor subunit TOM40 homolog</fullName>
    </recommendedName>
    <alternativeName>
        <fullName>Translocase of outer membrane 40 kDa subunit homolog</fullName>
    </alternativeName>
</protein>
<evidence type="ECO:0000250" key="1">
    <source>
        <dbReference type="UniProtKB" id="O96008"/>
    </source>
</evidence>
<evidence type="ECO:0000255" key="2"/>
<evidence type="ECO:0000256" key="3">
    <source>
        <dbReference type="SAM" id="MobiDB-lite"/>
    </source>
</evidence>
<evidence type="ECO:0000305" key="4"/>
<reference key="1">
    <citation type="submission" date="2003-01" db="EMBL/GenBank/DDBJ databases">
        <authorList>
            <consortium name="NIH - Xenopus Gene Collection (XGC) project"/>
        </authorList>
    </citation>
    <scope>NUCLEOTIDE SEQUENCE [LARGE SCALE MRNA]</scope>
    <source>
        <tissue>Embryo</tissue>
    </source>
</reference>
<keyword id="KW-0406">Ion transport</keyword>
<keyword id="KW-0472">Membrane</keyword>
<keyword id="KW-0496">Mitochondrion</keyword>
<keyword id="KW-1000">Mitochondrion outer membrane</keyword>
<keyword id="KW-0626">Porin</keyword>
<keyword id="KW-0653">Protein transport</keyword>
<keyword id="KW-1185">Reference proteome</keyword>
<keyword id="KW-0812">Transmembrane</keyword>
<keyword id="KW-1134">Transmembrane beta strand</keyword>
<keyword id="KW-0813">Transport</keyword>
<name>TOM40_XENLA</name>
<proteinExistence type="evidence at transcript level"/>
<sequence>MGNVLAASSPAPPPAGSPPVPGLVSVPPGFTMPPVAGLTPTPDKKEPQEERLPNPGTFEECHRKCKELFPIQMEGVKLIVNKGLSNYFQVNHTISLSTIGESNYHFGATYVGTKQLGPAEAFPVLVGDFDNSGSLNGQIIHQVTNNIRSKIALQTQQSKFVNWQLDTEYRGEDYTASVTLGNPDILVGSGILVAHYLQSITPSLALGGELVYHRRPGEEGTVMSLAGRYTAPSWTATLTLGQAGAHATYYHKANDQLQLGVEFEASARMQDTSVSLGYQLDLPKANLLFKGSIDSNWIVGATLEKKLPPLPLTLAMGAFLNHKKNKFQCGFGLTIG</sequence>
<organism>
    <name type="scientific">Xenopus laevis</name>
    <name type="common">African clawed frog</name>
    <dbReference type="NCBI Taxonomy" id="8355"/>
    <lineage>
        <taxon>Eukaryota</taxon>
        <taxon>Metazoa</taxon>
        <taxon>Chordata</taxon>
        <taxon>Craniata</taxon>
        <taxon>Vertebrata</taxon>
        <taxon>Euteleostomi</taxon>
        <taxon>Amphibia</taxon>
        <taxon>Batrachia</taxon>
        <taxon>Anura</taxon>
        <taxon>Pipoidea</taxon>
        <taxon>Pipidae</taxon>
        <taxon>Xenopodinae</taxon>
        <taxon>Xenopus</taxon>
        <taxon>Xenopus</taxon>
    </lineage>
</organism>
<feature type="chain" id="PRO_0000051526" description="Mitochondrial import receptor subunit TOM40 homolog">
    <location>
        <begin position="1"/>
        <end position="336"/>
    </location>
</feature>
<feature type="region of interest" description="Disordered" evidence="3">
    <location>
        <begin position="1"/>
        <end position="58"/>
    </location>
</feature>
<feature type="compositionally biased region" description="Pro residues" evidence="3">
    <location>
        <begin position="10"/>
        <end position="21"/>
    </location>
</feature>
<feature type="compositionally biased region" description="Basic and acidic residues" evidence="3">
    <location>
        <begin position="42"/>
        <end position="52"/>
    </location>
</feature>
<comment type="function">
    <text evidence="1">Channel-forming protein essential for import of protein precursors into mitochondria.</text>
</comment>
<comment type="subunit">
    <text evidence="1">Forms part of the preprotein translocase complex of the outer mitochondrial membrane (TOM complex). Interacts with mitochondrial targeting sequences (By similarity).</text>
</comment>
<comment type="subcellular location">
    <subcellularLocation>
        <location evidence="1">Mitochondrion outer membrane</location>
        <topology evidence="2">Multi-pass membrane protein</topology>
    </subcellularLocation>
</comment>
<comment type="similarity">
    <text evidence="4">Belongs to the Tom40 family.</text>
</comment>
<accession>Q7ZTM6</accession>
<gene>
    <name type="primary">tomm40</name>
</gene>
<dbReference type="EMBL" id="BC044706">
    <property type="protein sequence ID" value="AAH44706.1"/>
    <property type="molecule type" value="mRNA"/>
</dbReference>
<dbReference type="RefSeq" id="NP_001080609.1">
    <property type="nucleotide sequence ID" value="NM_001087140.1"/>
</dbReference>
<dbReference type="SMR" id="Q7ZTM6"/>
<dbReference type="BioGRID" id="98543">
    <property type="interactions" value="1"/>
</dbReference>
<dbReference type="GeneID" id="380301"/>
<dbReference type="KEGG" id="xla:380301"/>
<dbReference type="AGR" id="Xenbase:XB-GENE-995156"/>
<dbReference type="CTD" id="380301"/>
<dbReference type="Xenbase" id="XB-GENE-995156">
    <property type="gene designation" value="tomm40.L"/>
</dbReference>
<dbReference type="OMA" id="MNLPCPV"/>
<dbReference type="OrthoDB" id="19656at2759"/>
<dbReference type="Proteomes" id="UP000186698">
    <property type="component" value="Chromosome 7L"/>
</dbReference>
<dbReference type="Bgee" id="380301">
    <property type="expression patterns" value="Expressed in neurula embryo and 19 other cell types or tissues"/>
</dbReference>
<dbReference type="GO" id="GO:0005742">
    <property type="term" value="C:mitochondrial outer membrane translocase complex"/>
    <property type="evidence" value="ECO:0000318"/>
    <property type="project" value="GO_Central"/>
</dbReference>
<dbReference type="GO" id="GO:0046930">
    <property type="term" value="C:pore complex"/>
    <property type="evidence" value="ECO:0007669"/>
    <property type="project" value="UniProtKB-KW"/>
</dbReference>
<dbReference type="GO" id="GO:0015288">
    <property type="term" value="F:porin activity"/>
    <property type="evidence" value="ECO:0007669"/>
    <property type="project" value="UniProtKB-KW"/>
</dbReference>
<dbReference type="GO" id="GO:0008320">
    <property type="term" value="F:protein transmembrane transporter activity"/>
    <property type="evidence" value="ECO:0000318"/>
    <property type="project" value="GO_Central"/>
</dbReference>
<dbReference type="GO" id="GO:0006811">
    <property type="term" value="P:monoatomic ion transport"/>
    <property type="evidence" value="ECO:0007669"/>
    <property type="project" value="UniProtKB-KW"/>
</dbReference>
<dbReference type="GO" id="GO:0030150">
    <property type="term" value="P:protein import into mitochondrial matrix"/>
    <property type="evidence" value="ECO:0000318"/>
    <property type="project" value="GO_Central"/>
</dbReference>
<dbReference type="GO" id="GO:0006626">
    <property type="term" value="P:protein targeting to mitochondrion"/>
    <property type="evidence" value="ECO:0000250"/>
    <property type="project" value="UniProtKB"/>
</dbReference>
<dbReference type="CDD" id="cd07305">
    <property type="entry name" value="Porin3_Tom40"/>
    <property type="match status" value="1"/>
</dbReference>
<dbReference type="FunFam" id="2.40.160.10:FF:000005">
    <property type="entry name" value="mitochondrial import receptor subunit TOM40 homolog"/>
    <property type="match status" value="1"/>
</dbReference>
<dbReference type="Gene3D" id="2.40.160.10">
    <property type="entry name" value="Porin"/>
    <property type="match status" value="1"/>
</dbReference>
<dbReference type="InterPro" id="IPR023614">
    <property type="entry name" value="Porin_dom_sf"/>
</dbReference>
<dbReference type="InterPro" id="IPR027246">
    <property type="entry name" value="Porin_Euk/Tom40"/>
</dbReference>
<dbReference type="InterPro" id="IPR037930">
    <property type="entry name" value="Tom40"/>
</dbReference>
<dbReference type="PANTHER" id="PTHR10802">
    <property type="entry name" value="MITOCHONDRIAL IMPORT RECEPTOR SUBUNIT TOM40"/>
    <property type="match status" value="1"/>
</dbReference>
<dbReference type="Pfam" id="PF01459">
    <property type="entry name" value="Porin_3"/>
    <property type="match status" value="1"/>
</dbReference>